<organism>
    <name type="scientific">Oenothera argillicola</name>
    <name type="common">Appalachian evening primrose</name>
    <dbReference type="NCBI Taxonomy" id="3940"/>
    <lineage>
        <taxon>Eukaryota</taxon>
        <taxon>Viridiplantae</taxon>
        <taxon>Streptophyta</taxon>
        <taxon>Embryophyta</taxon>
        <taxon>Tracheophyta</taxon>
        <taxon>Spermatophyta</taxon>
        <taxon>Magnoliopsida</taxon>
        <taxon>eudicotyledons</taxon>
        <taxon>Gunneridae</taxon>
        <taxon>Pentapetalae</taxon>
        <taxon>rosids</taxon>
        <taxon>malvids</taxon>
        <taxon>Myrtales</taxon>
        <taxon>Onagraceae</taxon>
        <taxon>Onagroideae</taxon>
        <taxon>Onagreae</taxon>
        <taxon>Oenothera</taxon>
    </lineage>
</organism>
<dbReference type="EMBL" id="EU262887">
    <property type="protein sequence ID" value="ABW98707.1"/>
    <property type="molecule type" value="Genomic_DNA"/>
</dbReference>
<dbReference type="RefSeq" id="YP_001687140.1">
    <property type="nucleotide sequence ID" value="NC_010358.2"/>
</dbReference>
<dbReference type="SMR" id="B0Z4M9"/>
<dbReference type="GeneID" id="5951946"/>
<dbReference type="GO" id="GO:0009535">
    <property type="term" value="C:chloroplast thylakoid membrane"/>
    <property type="evidence" value="ECO:0007669"/>
    <property type="project" value="UniProtKB-SubCell"/>
</dbReference>
<dbReference type="GO" id="GO:0005886">
    <property type="term" value="C:plasma membrane"/>
    <property type="evidence" value="ECO:0007669"/>
    <property type="project" value="UniProtKB-UniRule"/>
</dbReference>
<dbReference type="GO" id="GO:0045259">
    <property type="term" value="C:proton-transporting ATP synthase complex"/>
    <property type="evidence" value="ECO:0007669"/>
    <property type="project" value="UniProtKB-KW"/>
</dbReference>
<dbReference type="GO" id="GO:0046933">
    <property type="term" value="F:proton-transporting ATP synthase activity, rotational mechanism"/>
    <property type="evidence" value="ECO:0007669"/>
    <property type="project" value="UniProtKB-UniRule"/>
</dbReference>
<dbReference type="CDD" id="cd00310">
    <property type="entry name" value="ATP-synt_Fo_a_6"/>
    <property type="match status" value="1"/>
</dbReference>
<dbReference type="FunFam" id="1.20.120.220:FF:000001">
    <property type="entry name" value="ATP synthase subunit a, chloroplastic"/>
    <property type="match status" value="1"/>
</dbReference>
<dbReference type="Gene3D" id="1.20.120.220">
    <property type="entry name" value="ATP synthase, F0 complex, subunit A"/>
    <property type="match status" value="1"/>
</dbReference>
<dbReference type="HAMAP" id="MF_01393">
    <property type="entry name" value="ATP_synth_a_bact"/>
    <property type="match status" value="1"/>
</dbReference>
<dbReference type="InterPro" id="IPR045082">
    <property type="entry name" value="ATP_syn_F0_a_bact/chloroplast"/>
</dbReference>
<dbReference type="InterPro" id="IPR000568">
    <property type="entry name" value="ATP_synth_F0_asu"/>
</dbReference>
<dbReference type="InterPro" id="IPR023011">
    <property type="entry name" value="ATP_synth_F0_asu_AS"/>
</dbReference>
<dbReference type="InterPro" id="IPR035908">
    <property type="entry name" value="F0_ATP_A_sf"/>
</dbReference>
<dbReference type="NCBIfam" id="TIGR01131">
    <property type="entry name" value="ATP_synt_6_or_A"/>
    <property type="match status" value="1"/>
</dbReference>
<dbReference type="PANTHER" id="PTHR42823">
    <property type="entry name" value="ATP SYNTHASE SUBUNIT A, CHLOROPLASTIC"/>
    <property type="match status" value="1"/>
</dbReference>
<dbReference type="PANTHER" id="PTHR42823:SF3">
    <property type="entry name" value="ATP SYNTHASE SUBUNIT A, CHLOROPLASTIC"/>
    <property type="match status" value="1"/>
</dbReference>
<dbReference type="Pfam" id="PF00119">
    <property type="entry name" value="ATP-synt_A"/>
    <property type="match status" value="1"/>
</dbReference>
<dbReference type="PRINTS" id="PR00123">
    <property type="entry name" value="ATPASEA"/>
</dbReference>
<dbReference type="SUPFAM" id="SSF81336">
    <property type="entry name" value="F1F0 ATP synthase subunit A"/>
    <property type="match status" value="1"/>
</dbReference>
<dbReference type="PROSITE" id="PS00449">
    <property type="entry name" value="ATPASE_A"/>
    <property type="match status" value="1"/>
</dbReference>
<name>ATPI_OENAR</name>
<evidence type="ECO:0000255" key="1">
    <source>
        <dbReference type="HAMAP-Rule" id="MF_01393"/>
    </source>
</evidence>
<geneLocation type="chloroplast"/>
<gene>
    <name evidence="1" type="primary">atpI</name>
</gene>
<proteinExistence type="inferred from homology"/>
<sequence>MDVLSCSNNTLKGLYDISGVEVGQHFYWQIGGFQVHGQVLITSWVVIAILLGSASIAVRNPQTIPNDSQNFFEYILEFIRDVSKTQIGEEYGPWVPFIGTMFLFIFVSNWSGALLPWKLVELPHGELAAPTNDINTTVALALLTSVAYFYAGLSKKGLGYFSKYIQPTPILLPINILEDFTKPLSLSFRLFGNILADELVVVVLVSLVPSVVPIPVMFLGLFTSGIQALIFATLAAAYIGESMEGHH</sequence>
<protein>
    <recommendedName>
        <fullName evidence="1">ATP synthase subunit a, chloroplastic</fullName>
    </recommendedName>
    <alternativeName>
        <fullName evidence="1">ATP synthase F0 sector subunit a</fullName>
    </alternativeName>
    <alternativeName>
        <fullName evidence="1">F-ATPase subunit IV</fullName>
    </alternativeName>
</protein>
<comment type="function">
    <text evidence="1">Key component of the proton channel; it plays a direct role in the translocation of protons across the membrane.</text>
</comment>
<comment type="subunit">
    <text evidence="1">F-type ATPases have 2 components, CF(1) - the catalytic core - and CF(0) - the membrane proton channel. CF(1) has five subunits: alpha(3), beta(3), gamma(1), delta(1), epsilon(1). CF(0) has four main subunits: a, b, b' and c.</text>
</comment>
<comment type="subcellular location">
    <subcellularLocation>
        <location evidence="1">Plastid</location>
        <location evidence="1">Chloroplast thylakoid membrane</location>
        <topology evidence="1">Multi-pass membrane protein</topology>
    </subcellularLocation>
</comment>
<comment type="similarity">
    <text evidence="1">Belongs to the ATPase A chain family.</text>
</comment>
<reference key="1">
    <citation type="journal article" date="2008" name="Nucleic Acids Res.">
        <title>The complete nucleotide sequences of the five genetically distinct plastid genomes of Oenothera, subsection Oenothera: I. Sequence evaluation and plastome evolution.</title>
        <authorList>
            <person name="Greiner S."/>
            <person name="Wang X."/>
            <person name="Rauwolf U."/>
            <person name="Silber M.V."/>
            <person name="Mayer K."/>
            <person name="Meurer J."/>
            <person name="Haberer G."/>
            <person name="Herrmann R.G."/>
        </authorList>
    </citation>
    <scope>NUCLEOTIDE SEQUENCE [LARGE SCALE GENOMIC DNA]</scope>
    <source>
        <strain>cv. Douthat 1</strain>
    </source>
</reference>
<accession>B0Z4M9</accession>
<feature type="chain" id="PRO_0000362580" description="ATP synthase subunit a, chloroplastic">
    <location>
        <begin position="1"/>
        <end position="247"/>
    </location>
</feature>
<feature type="transmembrane region" description="Helical" evidence="1">
    <location>
        <begin position="38"/>
        <end position="58"/>
    </location>
</feature>
<feature type="transmembrane region" description="Helical" evidence="1">
    <location>
        <begin position="95"/>
        <end position="115"/>
    </location>
</feature>
<feature type="transmembrane region" description="Helical" evidence="1">
    <location>
        <begin position="134"/>
        <end position="154"/>
    </location>
</feature>
<feature type="transmembrane region" description="Helical" evidence="1">
    <location>
        <begin position="199"/>
        <end position="219"/>
    </location>
</feature>
<feature type="transmembrane region" description="Helical" evidence="1">
    <location>
        <begin position="220"/>
        <end position="240"/>
    </location>
</feature>
<keyword id="KW-0066">ATP synthesis</keyword>
<keyword id="KW-0138">CF(0)</keyword>
<keyword id="KW-0150">Chloroplast</keyword>
<keyword id="KW-0375">Hydrogen ion transport</keyword>
<keyword id="KW-0406">Ion transport</keyword>
<keyword id="KW-0472">Membrane</keyword>
<keyword id="KW-0934">Plastid</keyword>
<keyword id="KW-0793">Thylakoid</keyword>
<keyword id="KW-0812">Transmembrane</keyword>
<keyword id="KW-1133">Transmembrane helix</keyword>
<keyword id="KW-0813">Transport</keyword>